<gene>
    <name evidence="4" type="primary">ctu</name>
    <name evidence="7" type="ordered locus">FTT_0435</name>
</gene>
<name>CTU_FRATT</name>
<evidence type="ECO:0000255" key="1">
    <source>
        <dbReference type="PROSITE-ProRule" id="PRU00054"/>
    </source>
</evidence>
<evidence type="ECO:0000269" key="2">
    <source>
    </source>
</evidence>
<evidence type="ECO:0000269" key="3">
    <source ref="3"/>
</evidence>
<evidence type="ECO:0000303" key="4">
    <source>
    </source>
</evidence>
<evidence type="ECO:0000305" key="5"/>
<evidence type="ECO:0000305" key="6">
    <source>
    </source>
</evidence>
<evidence type="ECO:0000312" key="7">
    <source>
        <dbReference type="EMBL" id="CAG45068.1"/>
    </source>
</evidence>
<keyword id="KW-0378">Hydrolase</keyword>
<keyword id="KW-1185">Reference proteome</keyword>
<keyword id="KW-0843">Virulence</keyword>
<organism>
    <name type="scientific">Francisella tularensis subsp. tularensis (strain SCHU S4 / Schu 4)</name>
    <dbReference type="NCBI Taxonomy" id="177416"/>
    <lineage>
        <taxon>Bacteria</taxon>
        <taxon>Pseudomonadati</taxon>
        <taxon>Pseudomonadota</taxon>
        <taxon>Gammaproteobacteria</taxon>
        <taxon>Thiotrichales</taxon>
        <taxon>Francisellaceae</taxon>
        <taxon>Francisella</taxon>
    </lineage>
</organism>
<sequence length="286" mass="32430">MANIKVAVVQLSFNDNEAENLAKLESKIIQAAKNGAKIILTPELPSYLYFCKKQNSKYFDLAKTIDESPIVKLYKLLAHKYNIVLPASFFERDGNACYNSIAMIDADGSIMGVYRKAHIPDGIGYQEKYYFSPGSAGFKVWDTKYAKVGVGICWDQWFPEAARVMALKGAEILLYPTAIGSEPHLPDYDSKDHWQRVMQGHAAANMLPVLASNRYATEANDDITATYYGSSFITDHTGDKIAEADRSGDDILYATFDFAELQQQRFYWGLFRDRRPELYDEIVRKY</sequence>
<comment type="function">
    <text evidence="2 3">Catalyzes the degradation of citrulline into ornithine, carbon dioxide and ammonia (PubMed:19502406, Ref.3). Contributes to intramacrophage survival, in vivo growth and pathogenesis (PubMed:19502406).</text>
</comment>
<comment type="catalytic activity">
    <reaction evidence="2 3">
        <text>L-citrulline + H2O + 2 H(+) = L-ornithine + NH4(+) + CO2</text>
        <dbReference type="Rhea" id="RHEA:11940"/>
        <dbReference type="ChEBI" id="CHEBI:15377"/>
        <dbReference type="ChEBI" id="CHEBI:15378"/>
        <dbReference type="ChEBI" id="CHEBI:16526"/>
        <dbReference type="ChEBI" id="CHEBI:28938"/>
        <dbReference type="ChEBI" id="CHEBI:46911"/>
        <dbReference type="ChEBI" id="CHEBI:57743"/>
        <dbReference type="EC" id="3.5.1.20"/>
    </reaction>
    <physiologicalReaction direction="left-to-right" evidence="6">
        <dbReference type="Rhea" id="RHEA:11941"/>
    </physiologicalReaction>
</comment>
<comment type="disruption phenotype">
    <text evidence="2">Deletion of the gene results in loss of CTU activity (PubMed:19502406). Loss of the gene does not affect acellular growth, but it impairs intramacrophage survival in resting as well as gamma interferon-stimulated macrophages (PubMed:19502406). Mice infected intranasally with the mutant show significantly reduced bacterial burden in the lungs, liver and spleen compared to wild-type Schu S4-infected mice (PubMed:19502406). Mice infected with the mutant succumb to infection, but they survive longer and show significantly extended median time to death compared to that shown by wild-type Schu S4-infected mice (PubMed:19502406).</text>
</comment>
<comment type="biotechnology">
    <text evidence="3">Is a good candidate for development of an efficient and cost-effective enzymatic-based method for preparation of ornithine.</text>
</comment>
<comment type="similarity">
    <text evidence="5">Belongs to the carbon-nitrogen hydrolase superfamily.</text>
</comment>
<proteinExistence type="evidence at protein level"/>
<protein>
    <recommendedName>
        <fullName evidence="5">Citrullinase</fullName>
        <ecNumber evidence="2 3">3.5.1.20</ecNumber>
    </recommendedName>
    <alternativeName>
        <fullName evidence="4">Citrulline ureidase</fullName>
        <shortName evidence="4">CTU</shortName>
    </alternativeName>
</protein>
<dbReference type="EC" id="3.5.1.20" evidence="2 3"/>
<dbReference type="EMBL" id="AJ749949">
    <property type="protein sequence ID" value="CAG45068.1"/>
    <property type="molecule type" value="Genomic_DNA"/>
</dbReference>
<dbReference type="RefSeq" id="YP_169475.1">
    <property type="nucleotide sequence ID" value="NC_006570.2"/>
</dbReference>
<dbReference type="SMR" id="Q5NHL7"/>
<dbReference type="IntAct" id="Q5NHL7">
    <property type="interactions" value="5"/>
</dbReference>
<dbReference type="DNASU" id="3191421"/>
<dbReference type="EnsemblBacteria" id="CAG45068">
    <property type="protein sequence ID" value="CAG45068"/>
    <property type="gene ID" value="FTT_0435"/>
</dbReference>
<dbReference type="KEGG" id="ftu:FTT_0435"/>
<dbReference type="PATRIC" id="fig|177416.36.peg.422"/>
<dbReference type="eggNOG" id="COG0388">
    <property type="taxonomic scope" value="Bacteria"/>
</dbReference>
<dbReference type="OrthoDB" id="9811121at2"/>
<dbReference type="BioCyc" id="MetaCyc:MONOMER-124195"/>
<dbReference type="BRENDA" id="3.5.1.20">
    <property type="organism ID" value="14771"/>
</dbReference>
<dbReference type="Proteomes" id="UP000001174">
    <property type="component" value="Chromosome"/>
</dbReference>
<dbReference type="GO" id="GO:0047781">
    <property type="term" value="F:citrullinase activity"/>
    <property type="evidence" value="ECO:0007669"/>
    <property type="project" value="RHEA"/>
</dbReference>
<dbReference type="GO" id="GO:0050126">
    <property type="term" value="F:N-carbamoylputrescine amidase activity"/>
    <property type="evidence" value="ECO:0007669"/>
    <property type="project" value="InterPro"/>
</dbReference>
<dbReference type="GO" id="GO:0033388">
    <property type="term" value="P:putrescine biosynthetic process from arginine"/>
    <property type="evidence" value="ECO:0007669"/>
    <property type="project" value="TreeGrafter"/>
</dbReference>
<dbReference type="CDD" id="cd07573">
    <property type="entry name" value="CPA"/>
    <property type="match status" value="1"/>
</dbReference>
<dbReference type="Gene3D" id="3.60.110.10">
    <property type="entry name" value="Carbon-nitrogen hydrolase"/>
    <property type="match status" value="1"/>
</dbReference>
<dbReference type="InterPro" id="IPR050345">
    <property type="entry name" value="Aliph_Amidase/BUP"/>
</dbReference>
<dbReference type="InterPro" id="IPR003010">
    <property type="entry name" value="C-N_Hydrolase"/>
</dbReference>
<dbReference type="InterPro" id="IPR036526">
    <property type="entry name" value="C-N_Hydrolase_sf"/>
</dbReference>
<dbReference type="InterPro" id="IPR017755">
    <property type="entry name" value="N-carbamoylputrescine_amidase"/>
</dbReference>
<dbReference type="NCBIfam" id="TIGR03381">
    <property type="entry name" value="agmatine_aguB"/>
    <property type="match status" value="1"/>
</dbReference>
<dbReference type="PANTHER" id="PTHR43674:SF2">
    <property type="entry name" value="BETA-UREIDOPROPIONASE"/>
    <property type="match status" value="1"/>
</dbReference>
<dbReference type="PANTHER" id="PTHR43674">
    <property type="entry name" value="NITRILASE C965.09-RELATED"/>
    <property type="match status" value="1"/>
</dbReference>
<dbReference type="Pfam" id="PF00795">
    <property type="entry name" value="CN_hydrolase"/>
    <property type="match status" value="1"/>
</dbReference>
<dbReference type="SUPFAM" id="SSF56317">
    <property type="entry name" value="Carbon-nitrogen hydrolase"/>
    <property type="match status" value="1"/>
</dbReference>
<dbReference type="PROSITE" id="PS50263">
    <property type="entry name" value="CN_HYDROLASE"/>
    <property type="match status" value="1"/>
</dbReference>
<reference key="1">
    <citation type="journal article" date="2005" name="Nat. Genet.">
        <title>The complete genome sequence of Francisella tularensis, the causative agent of tularemia.</title>
        <authorList>
            <person name="Larsson P."/>
            <person name="Oyston P.C.F."/>
            <person name="Chain P."/>
            <person name="Chu M.C."/>
            <person name="Duffield M."/>
            <person name="Fuxelius H.-H."/>
            <person name="Garcia E."/>
            <person name="Haelltorp G."/>
            <person name="Johansson D."/>
            <person name="Isherwood K.E."/>
            <person name="Karp P.D."/>
            <person name="Larsson E."/>
            <person name="Liu Y."/>
            <person name="Michell S."/>
            <person name="Prior J."/>
            <person name="Prior R."/>
            <person name="Malfatti S."/>
            <person name="Sjoestedt A."/>
            <person name="Svensson K."/>
            <person name="Thompson N."/>
            <person name="Vergez L."/>
            <person name="Wagg J.K."/>
            <person name="Wren B.W."/>
            <person name="Lindler L.E."/>
            <person name="Andersson S.G.E."/>
            <person name="Forsman M."/>
            <person name="Titball R.W."/>
        </authorList>
    </citation>
    <scope>NUCLEOTIDE SEQUENCE [LARGE SCALE GENOMIC DNA]</scope>
    <source>
        <strain>SCHU S4 / Schu 4</strain>
    </source>
</reference>
<reference key="2">
    <citation type="journal article" date="2009" name="J. Bacteriol.">
        <title>Contribution of citrulline ureidase to Francisella tularensis strain Schu S4 pathogenesis.</title>
        <authorList>
            <person name="Mahawar M."/>
            <person name="Kirimanjeswara G.S."/>
            <person name="Metzger D.W."/>
            <person name="Bakshi C.S."/>
        </authorList>
    </citation>
    <scope>FUNCTION</scope>
    <scope>CATALYTIC ACTIVITY</scope>
    <scope>DISRUPTION PHENOTYPE</scope>
    <source>
        <strain>SCHU S4 / Schu 4</strain>
    </source>
</reference>
<reference key="3">
    <citation type="journal article" date="2015" name="J. Appl. Biomed.">
        <title>The expression, purification and activity analysis of Francisella tularensis citrulline ureidase in Escherichia coli.</title>
        <authorList>
            <person name="Zhu T."/>
            <person name="Fang S."/>
            <person name="Wang W."/>
            <person name="Wang K."/>
            <person name="Cui Z."/>
            <person name="Wang C."/>
        </authorList>
    </citation>
    <scope>FUNCTION</scope>
    <scope>CATALYTIC ACTIVITY</scope>
    <scope>BIOTECHNOLOGY</scope>
</reference>
<feature type="chain" id="PRO_0000456187" description="Citrullinase">
    <location>
        <begin position="1"/>
        <end position="286"/>
    </location>
</feature>
<feature type="domain" description="CN hydrolase" evidence="1">
    <location>
        <begin position="4"/>
        <end position="258"/>
    </location>
</feature>
<feature type="active site" description="Proton acceptor" evidence="1">
    <location>
        <position position="43"/>
    </location>
</feature>
<feature type="active site" evidence="1">
    <location>
        <position position="116"/>
    </location>
</feature>
<feature type="active site" description="Nucleophile" evidence="1">
    <location>
        <position position="153"/>
    </location>
</feature>
<accession>Q5NHL7</accession>
<accession>A0A0G2RPP9</accession>